<feature type="chain" id="PRO_0000312793" description="Protein mab-21">
    <location>
        <begin position="1"/>
        <end position="365"/>
    </location>
</feature>
<keyword id="KW-0539">Nucleus</keyword>
<keyword id="KW-1185">Reference proteome</keyword>
<sequence>MLVPPEMIAVQSKLIYQMNKYCADRVQARKAQIHKTIQEVCRVVQDVLKEVEVQEPRFISSLNDYNGRFDGLEVVSPTEFEIIIYLNQMGVLNFVDDGTLPGCAVLKLSDGRKRSMSLWVEFITASGYLSARKIRSRFQTLVAQACDKCAYRDSVKMIADTTEVKLRIRERIIVQITPAFKCAGLWPRSASHWPLPQIPWPHPNIVSEVKTEGFDMLSKECIALQGKNSAMEGDAWVLSFTEAENKLLQGGCRRRCLSILKTLRDRHLDLPGNPVTSYIMKTLLLYECEKHPREMEWDENCMGDRINGIFLQLISCLQCRRCPHYFLPNMDLFKGKSPGALENASKQVWRLTRIMLTNSRCLEEL</sequence>
<evidence type="ECO:0000250" key="1"/>
<evidence type="ECO:0000305" key="2"/>
<accession>Q0IES8</accession>
<protein>
    <recommendedName>
        <fullName>Protein mab-21</fullName>
    </recommendedName>
</protein>
<dbReference type="EMBL" id="CH477486">
    <property type="protein sequence ID" value="EAT40126.1"/>
    <property type="molecule type" value="Genomic_DNA"/>
</dbReference>
<dbReference type="RefSeq" id="XP_001653106.1">
    <property type="nucleotide sequence ID" value="XM_001653056.1"/>
</dbReference>
<dbReference type="SMR" id="Q0IES8"/>
<dbReference type="FunCoup" id="Q0IES8">
    <property type="interactions" value="214"/>
</dbReference>
<dbReference type="STRING" id="7159.Q0IES8"/>
<dbReference type="PaxDb" id="7159-AAEL008118-PA"/>
<dbReference type="GeneID" id="5570126"/>
<dbReference type="KEGG" id="aag:5570126"/>
<dbReference type="VEuPathDB" id="VectorBase:AAEL008118"/>
<dbReference type="eggNOG" id="KOG3963">
    <property type="taxonomic scope" value="Eukaryota"/>
</dbReference>
<dbReference type="HOGENOM" id="CLU_045315_0_0_1"/>
<dbReference type="InParanoid" id="Q0IES8"/>
<dbReference type="OMA" id="RESIYMK"/>
<dbReference type="OrthoDB" id="5961151at2759"/>
<dbReference type="PhylomeDB" id="Q0IES8"/>
<dbReference type="Proteomes" id="UP000008820">
    <property type="component" value="Unassembled WGS sequence"/>
</dbReference>
<dbReference type="Proteomes" id="UP000682892">
    <property type="component" value="Chromosome 3"/>
</dbReference>
<dbReference type="GO" id="GO:0005634">
    <property type="term" value="C:nucleus"/>
    <property type="evidence" value="ECO:0007669"/>
    <property type="project" value="UniProtKB-SubCell"/>
</dbReference>
<dbReference type="FunFam" id="1.10.1410.40:FF:000002">
    <property type="entry name" value="protein mab-21-like 1"/>
    <property type="match status" value="1"/>
</dbReference>
<dbReference type="FunFam" id="3.30.460.90:FF:000001">
    <property type="entry name" value="protein mab-21-like 2"/>
    <property type="match status" value="1"/>
</dbReference>
<dbReference type="Gene3D" id="1.10.1410.40">
    <property type="match status" value="1"/>
</dbReference>
<dbReference type="Gene3D" id="3.30.460.90">
    <property type="match status" value="1"/>
</dbReference>
<dbReference type="InterPro" id="IPR046903">
    <property type="entry name" value="Mab-21-like_nuc_Trfase"/>
</dbReference>
<dbReference type="InterPro" id="IPR046906">
    <property type="entry name" value="Mab-21_HhH/H2TH-like"/>
</dbReference>
<dbReference type="InterPro" id="IPR024810">
    <property type="entry name" value="MAB21L/cGLR"/>
</dbReference>
<dbReference type="PANTHER" id="PTHR10656">
    <property type="entry name" value="CELL FATE DETERMINING PROTEIN MAB21-RELATED"/>
    <property type="match status" value="1"/>
</dbReference>
<dbReference type="PANTHER" id="PTHR10656:SF70">
    <property type="entry name" value="PROTEIN MAB-21-RELATED"/>
    <property type="match status" value="1"/>
</dbReference>
<dbReference type="Pfam" id="PF03281">
    <property type="entry name" value="Mab-21"/>
    <property type="match status" value="1"/>
</dbReference>
<dbReference type="Pfam" id="PF20266">
    <property type="entry name" value="Mab-21_C"/>
    <property type="match status" value="1"/>
</dbReference>
<dbReference type="SMART" id="SM01265">
    <property type="entry name" value="Mab-21"/>
    <property type="match status" value="1"/>
</dbReference>
<name>MAB21_AEDAE</name>
<proteinExistence type="inferred from homology"/>
<comment type="subcellular location">
    <subcellularLocation>
        <location evidence="1">Nucleus</location>
    </subcellularLocation>
</comment>
<comment type="similarity">
    <text evidence="2">Belongs to the mab-21 family.</text>
</comment>
<comment type="caution">
    <text evidence="2">It is uncertain whether Met-1 or Met-7 is the initiator.</text>
</comment>
<organism>
    <name type="scientific">Aedes aegypti</name>
    <name type="common">Yellowfever mosquito</name>
    <name type="synonym">Culex aegypti</name>
    <dbReference type="NCBI Taxonomy" id="7159"/>
    <lineage>
        <taxon>Eukaryota</taxon>
        <taxon>Metazoa</taxon>
        <taxon>Ecdysozoa</taxon>
        <taxon>Arthropoda</taxon>
        <taxon>Hexapoda</taxon>
        <taxon>Insecta</taxon>
        <taxon>Pterygota</taxon>
        <taxon>Neoptera</taxon>
        <taxon>Endopterygota</taxon>
        <taxon>Diptera</taxon>
        <taxon>Nematocera</taxon>
        <taxon>Culicoidea</taxon>
        <taxon>Culicidae</taxon>
        <taxon>Culicinae</taxon>
        <taxon>Aedini</taxon>
        <taxon>Aedes</taxon>
        <taxon>Stegomyia</taxon>
    </lineage>
</organism>
<gene>
    <name type="primary">mab-21</name>
    <name type="ORF">AAEL008118</name>
</gene>
<reference key="1">
    <citation type="journal article" date="2007" name="Science">
        <title>Genome sequence of Aedes aegypti, a major arbovirus vector.</title>
        <authorList>
            <person name="Nene V."/>
            <person name="Wortman J.R."/>
            <person name="Lawson D."/>
            <person name="Haas B.J."/>
            <person name="Kodira C.D."/>
            <person name="Tu Z.J."/>
            <person name="Loftus B.J."/>
            <person name="Xi Z."/>
            <person name="Megy K."/>
            <person name="Grabherr M."/>
            <person name="Ren Q."/>
            <person name="Zdobnov E.M."/>
            <person name="Lobo N.F."/>
            <person name="Campbell K.S."/>
            <person name="Brown S.E."/>
            <person name="Bonaldo M.F."/>
            <person name="Zhu J."/>
            <person name="Sinkins S.P."/>
            <person name="Hogenkamp D.G."/>
            <person name="Amedeo P."/>
            <person name="Arensburger P."/>
            <person name="Atkinson P.W."/>
            <person name="Bidwell S.L."/>
            <person name="Biedler J."/>
            <person name="Birney E."/>
            <person name="Bruggner R.V."/>
            <person name="Costas J."/>
            <person name="Coy M.R."/>
            <person name="Crabtree J."/>
            <person name="Crawford M."/>
            <person name="DeBruyn B."/>
            <person name="DeCaprio D."/>
            <person name="Eiglmeier K."/>
            <person name="Eisenstadt E."/>
            <person name="El-Dorry H."/>
            <person name="Gelbart W.M."/>
            <person name="Gomes S.L."/>
            <person name="Hammond M."/>
            <person name="Hannick L.I."/>
            <person name="Hogan J.R."/>
            <person name="Holmes M.H."/>
            <person name="Jaffe D."/>
            <person name="Johnston S.J."/>
            <person name="Kennedy R.C."/>
            <person name="Koo H."/>
            <person name="Kravitz S."/>
            <person name="Kriventseva E.V."/>
            <person name="Kulp D."/>
            <person name="Labutti K."/>
            <person name="Lee E."/>
            <person name="Li S."/>
            <person name="Lovin D.D."/>
            <person name="Mao C."/>
            <person name="Mauceli E."/>
            <person name="Menck C.F."/>
            <person name="Miller J.R."/>
            <person name="Montgomery P."/>
            <person name="Mori A."/>
            <person name="Nascimento A.L."/>
            <person name="Naveira H.F."/>
            <person name="Nusbaum C."/>
            <person name="O'Leary S.B."/>
            <person name="Orvis J."/>
            <person name="Pertea M."/>
            <person name="Quesneville H."/>
            <person name="Reidenbach K.R."/>
            <person name="Rogers Y.-H.C."/>
            <person name="Roth C.W."/>
            <person name="Schneider J.R."/>
            <person name="Schatz M."/>
            <person name="Shumway M."/>
            <person name="Stanke M."/>
            <person name="Stinson E.O."/>
            <person name="Tubio J.M.C."/>
            <person name="Vanzee J.P."/>
            <person name="Verjovski-Almeida S."/>
            <person name="Werner D."/>
            <person name="White O.R."/>
            <person name="Wyder S."/>
            <person name="Zeng Q."/>
            <person name="Zhao Q."/>
            <person name="Zhao Y."/>
            <person name="Hill C.A."/>
            <person name="Raikhel A.S."/>
            <person name="Soares M.B."/>
            <person name="Knudson D.L."/>
            <person name="Lee N.H."/>
            <person name="Galagan J."/>
            <person name="Salzberg S.L."/>
            <person name="Paulsen I.T."/>
            <person name="Dimopoulos G."/>
            <person name="Collins F.H."/>
            <person name="Bruce B."/>
            <person name="Fraser-Liggett C.M."/>
            <person name="Severson D.W."/>
        </authorList>
    </citation>
    <scope>NUCLEOTIDE SEQUENCE [LARGE SCALE GENOMIC DNA]</scope>
    <source>
        <strain>LVPib12</strain>
    </source>
</reference>